<evidence type="ECO:0000250" key="1"/>
<evidence type="ECO:0000255" key="2">
    <source>
        <dbReference type="PROSITE-ProRule" id="PRU00434"/>
    </source>
</evidence>
<evidence type="ECO:0000305" key="3"/>
<reference key="1">
    <citation type="journal article" date="2001" name="Proc. Natl. Acad. Sci. U.S.A.">
        <title>The complete genome of the crenarchaeon Sulfolobus solfataricus P2.</title>
        <authorList>
            <person name="She Q."/>
            <person name="Singh R.K."/>
            <person name="Confalonieri F."/>
            <person name="Zivanovic Y."/>
            <person name="Allard G."/>
            <person name="Awayez M.J."/>
            <person name="Chan-Weiher C.C.-Y."/>
            <person name="Clausen I.G."/>
            <person name="Curtis B.A."/>
            <person name="De Moors A."/>
            <person name="Erauso G."/>
            <person name="Fletcher C."/>
            <person name="Gordon P.M.K."/>
            <person name="Heikamp-de Jong I."/>
            <person name="Jeffries A.C."/>
            <person name="Kozera C.J."/>
            <person name="Medina N."/>
            <person name="Peng X."/>
            <person name="Thi-Ngoc H.P."/>
            <person name="Redder P."/>
            <person name="Schenk M.E."/>
            <person name="Theriault C."/>
            <person name="Tolstrup N."/>
            <person name="Charlebois R.L."/>
            <person name="Doolittle W.F."/>
            <person name="Duguet M."/>
            <person name="Gaasterland T."/>
            <person name="Garrett R.A."/>
            <person name="Ragan M.A."/>
            <person name="Sensen C.W."/>
            <person name="Van der Oost J."/>
        </authorList>
    </citation>
    <scope>NUCLEOTIDE SEQUENCE [LARGE SCALE GENOMIC DNA]</scope>
    <source>
        <strain>ATCC 35092 / DSM 1617 / JCM 11322 / P2</strain>
    </source>
</reference>
<accession>Q97X60</accession>
<gene>
    <name type="ordered locus">SSO1893</name>
</gene>
<proteinExistence type="inferred from homology"/>
<protein>
    <recommendedName>
        <fullName>Putative ABC transporter ATP-binding protein SSO1893</fullName>
        <ecNumber>7.-.-.-</ecNumber>
    </recommendedName>
</protein>
<name>Y1893_SACS2</name>
<dbReference type="EC" id="7.-.-.-"/>
<dbReference type="EMBL" id="AE006641">
    <property type="protein sequence ID" value="AAK42084.1"/>
    <property type="molecule type" value="Genomic_DNA"/>
</dbReference>
<dbReference type="PIR" id="E90353">
    <property type="entry name" value="E90353"/>
</dbReference>
<dbReference type="RefSeq" id="WP_009992766.1">
    <property type="nucleotide sequence ID" value="NC_002754.1"/>
</dbReference>
<dbReference type="SMR" id="Q97X60"/>
<dbReference type="FunCoup" id="Q97X60">
    <property type="interactions" value="3"/>
</dbReference>
<dbReference type="STRING" id="273057.SSO1893"/>
<dbReference type="PaxDb" id="273057-SSO1893"/>
<dbReference type="EnsemblBacteria" id="AAK42084">
    <property type="protein sequence ID" value="AAK42084"/>
    <property type="gene ID" value="SSO1893"/>
</dbReference>
<dbReference type="KEGG" id="sso:SSO1893"/>
<dbReference type="PATRIC" id="fig|273057.12.peg.1949"/>
<dbReference type="eggNOG" id="arCOG00188">
    <property type="taxonomic scope" value="Archaea"/>
</dbReference>
<dbReference type="HOGENOM" id="CLU_000604_86_7_2"/>
<dbReference type="InParanoid" id="Q97X60"/>
<dbReference type="PhylomeDB" id="Q97X60"/>
<dbReference type="Proteomes" id="UP000001974">
    <property type="component" value="Chromosome"/>
</dbReference>
<dbReference type="GO" id="GO:0005886">
    <property type="term" value="C:plasma membrane"/>
    <property type="evidence" value="ECO:0000318"/>
    <property type="project" value="GO_Central"/>
</dbReference>
<dbReference type="GO" id="GO:0005524">
    <property type="term" value="F:ATP binding"/>
    <property type="evidence" value="ECO:0007669"/>
    <property type="project" value="UniProtKB-KW"/>
</dbReference>
<dbReference type="GO" id="GO:0016887">
    <property type="term" value="F:ATP hydrolysis activity"/>
    <property type="evidence" value="ECO:0007669"/>
    <property type="project" value="InterPro"/>
</dbReference>
<dbReference type="GO" id="GO:0022857">
    <property type="term" value="F:transmembrane transporter activity"/>
    <property type="evidence" value="ECO:0000318"/>
    <property type="project" value="GO_Central"/>
</dbReference>
<dbReference type="GO" id="GO:0055085">
    <property type="term" value="P:transmembrane transport"/>
    <property type="evidence" value="ECO:0000318"/>
    <property type="project" value="GO_Central"/>
</dbReference>
<dbReference type="CDD" id="cd03225">
    <property type="entry name" value="ABC_cobalt_CbiO_domain1"/>
    <property type="match status" value="2"/>
</dbReference>
<dbReference type="FunFam" id="3.40.50.300:FF:003633">
    <property type="entry name" value="Cobalt ABC transporter ATP-binding protein"/>
    <property type="match status" value="1"/>
</dbReference>
<dbReference type="FunFam" id="3.40.50.300:FF:003642">
    <property type="entry name" value="Cobalt ABC transporter ATP-binding protein"/>
    <property type="match status" value="1"/>
</dbReference>
<dbReference type="Gene3D" id="3.40.50.300">
    <property type="entry name" value="P-loop containing nucleotide triphosphate hydrolases"/>
    <property type="match status" value="2"/>
</dbReference>
<dbReference type="InterPro" id="IPR003593">
    <property type="entry name" value="AAA+_ATPase"/>
</dbReference>
<dbReference type="InterPro" id="IPR003439">
    <property type="entry name" value="ABC_transporter-like_ATP-bd"/>
</dbReference>
<dbReference type="InterPro" id="IPR015856">
    <property type="entry name" value="ABC_transpr_CbiO/EcfA_su"/>
</dbReference>
<dbReference type="InterPro" id="IPR050095">
    <property type="entry name" value="ECF_ABC_transporter_ATP-bd"/>
</dbReference>
<dbReference type="InterPro" id="IPR027417">
    <property type="entry name" value="P-loop_NTPase"/>
</dbReference>
<dbReference type="PANTHER" id="PTHR43553:SF23">
    <property type="entry name" value="ABC TRANSPORTER ATP-BINDING COMPONENT"/>
    <property type="match status" value="1"/>
</dbReference>
<dbReference type="PANTHER" id="PTHR43553">
    <property type="entry name" value="HEAVY METAL TRANSPORTER"/>
    <property type="match status" value="1"/>
</dbReference>
<dbReference type="Pfam" id="PF00005">
    <property type="entry name" value="ABC_tran"/>
    <property type="match status" value="2"/>
</dbReference>
<dbReference type="SMART" id="SM00382">
    <property type="entry name" value="AAA"/>
    <property type="match status" value="2"/>
</dbReference>
<dbReference type="SUPFAM" id="SSF52540">
    <property type="entry name" value="P-loop containing nucleoside triphosphate hydrolases"/>
    <property type="match status" value="2"/>
</dbReference>
<dbReference type="PROSITE" id="PS50893">
    <property type="entry name" value="ABC_TRANSPORTER_2"/>
    <property type="match status" value="2"/>
</dbReference>
<feature type="chain" id="PRO_0000092161" description="Putative ABC transporter ATP-binding protein SSO1893">
    <location>
        <begin position="1"/>
        <end position="530"/>
    </location>
</feature>
<feature type="domain" description="ABC transporter 1" evidence="2">
    <location>
        <begin position="6"/>
        <end position="243"/>
    </location>
</feature>
<feature type="domain" description="ABC transporter 2" evidence="2">
    <location>
        <begin position="282"/>
        <end position="516"/>
    </location>
</feature>
<feature type="binding site" evidence="2">
    <location>
        <begin position="38"/>
        <end position="45"/>
    </location>
    <ligand>
        <name>ATP</name>
        <dbReference type="ChEBI" id="CHEBI:30616"/>
        <label>1</label>
    </ligand>
</feature>
<feature type="binding site" evidence="2">
    <location>
        <begin position="314"/>
        <end position="321"/>
    </location>
    <ligand>
        <name>ATP</name>
        <dbReference type="ChEBI" id="CHEBI:30616"/>
        <label>2</label>
    </ligand>
</feature>
<organism>
    <name type="scientific">Saccharolobus solfataricus (strain ATCC 35092 / DSM 1617 / JCM 11322 / P2)</name>
    <name type="common">Sulfolobus solfataricus</name>
    <dbReference type="NCBI Taxonomy" id="273057"/>
    <lineage>
        <taxon>Archaea</taxon>
        <taxon>Thermoproteota</taxon>
        <taxon>Thermoprotei</taxon>
        <taxon>Sulfolobales</taxon>
        <taxon>Sulfolobaceae</taxon>
        <taxon>Saccharolobus</taxon>
    </lineage>
</organism>
<keyword id="KW-0067">ATP-binding</keyword>
<keyword id="KW-1003">Cell membrane</keyword>
<keyword id="KW-0472">Membrane</keyword>
<keyword id="KW-0547">Nucleotide-binding</keyword>
<keyword id="KW-1185">Reference proteome</keyword>
<keyword id="KW-0677">Repeat</keyword>
<keyword id="KW-1278">Translocase</keyword>
<keyword id="KW-0813">Transport</keyword>
<comment type="function">
    <text evidence="1">Probably part of an ABC transporter complex. Responsible for energy coupling to the transport system (By similarity).</text>
</comment>
<comment type="subcellular location">
    <subcellularLocation>
        <location evidence="1">Cell membrane</location>
        <topology evidence="1">Peripheral membrane protein</topology>
    </subcellularLocation>
</comment>
<comment type="similarity">
    <text evidence="3">Belongs to the ABC transporter superfamily.</text>
</comment>
<sequence length="530" mass="59832">MKFVEIRDLQVTYMGKTKPSIVIDKLDIEEGESVLITGRSGSGKSTLVSVINGVIPHLINAEVKGEVRVFGLDIKTTPTSEISRYVGTLLQDPDTQAFNYTVIDEVAFGVENYMVSREEMINRVEESMKICGISHLRDREINTLSGGELQRTVLASVLAMRPKALILDEPTSNIDPQGTREILELVKTFRSEGISLVLVEHKIERVLPFIDRIIVVESGKIAVDIKKDEIIDRADLLHSLGLEIPDYMLFLKKSGFRRIDYEYLRKTYNYKPPSRNEGKGEILFASVKVKTKSGKYLINTKISLKQGTITALMGKNGSGKTTLLKAIVGLIDKKRLIVEEEKVIVNGKDLSKAKLVERGKYLAYLPQFFDVMFIKRTVEDEVKFSMKNRGVYDEMRLGEILRIFSLDAYRTEDPLVLSMGQRRRVAMASVIAGGAKVILMDEPTSGQDWYHRQILGKELLELRNKGYTILVVTHDARFVDRFTDYLLVMSDGKIVLEGKPEEVFSKSLNHGIEPPLEYELGGLIKNEQFS</sequence>